<organism>
    <name type="scientific">Cyanothece sp. (strain PCC 7425 / ATCC 29141)</name>
    <dbReference type="NCBI Taxonomy" id="395961"/>
    <lineage>
        <taxon>Bacteria</taxon>
        <taxon>Bacillati</taxon>
        <taxon>Cyanobacteriota</taxon>
        <taxon>Cyanophyceae</taxon>
        <taxon>Gomontiellales</taxon>
        <taxon>Cyanothecaceae</taxon>
        <taxon>Cyanothece</taxon>
    </lineage>
</organism>
<gene>
    <name evidence="1" type="primary">ileS</name>
    <name type="ordered locus">Cyan7425_3114</name>
</gene>
<comment type="function">
    <text evidence="1">Catalyzes the attachment of isoleucine to tRNA(Ile). As IleRS can inadvertently accommodate and process structurally similar amino acids such as valine, to avoid such errors it has two additional distinct tRNA(Ile)-dependent editing activities. One activity is designated as 'pretransfer' editing and involves the hydrolysis of activated Val-AMP. The other activity is designated 'posttransfer' editing and involves deacylation of mischarged Val-tRNA(Ile).</text>
</comment>
<comment type="catalytic activity">
    <reaction evidence="1">
        <text>tRNA(Ile) + L-isoleucine + ATP = L-isoleucyl-tRNA(Ile) + AMP + diphosphate</text>
        <dbReference type="Rhea" id="RHEA:11060"/>
        <dbReference type="Rhea" id="RHEA-COMP:9666"/>
        <dbReference type="Rhea" id="RHEA-COMP:9695"/>
        <dbReference type="ChEBI" id="CHEBI:30616"/>
        <dbReference type="ChEBI" id="CHEBI:33019"/>
        <dbReference type="ChEBI" id="CHEBI:58045"/>
        <dbReference type="ChEBI" id="CHEBI:78442"/>
        <dbReference type="ChEBI" id="CHEBI:78528"/>
        <dbReference type="ChEBI" id="CHEBI:456215"/>
        <dbReference type="EC" id="6.1.1.5"/>
    </reaction>
</comment>
<comment type="cofactor">
    <cofactor evidence="1">
        <name>Zn(2+)</name>
        <dbReference type="ChEBI" id="CHEBI:29105"/>
    </cofactor>
    <text evidence="1">Binds 1 zinc ion per subunit.</text>
</comment>
<comment type="subunit">
    <text evidence="1">Monomer.</text>
</comment>
<comment type="subcellular location">
    <subcellularLocation>
        <location evidence="1">Cytoplasm</location>
    </subcellularLocation>
</comment>
<comment type="domain">
    <text evidence="1">IleRS has two distinct active sites: one for aminoacylation and one for editing. The misactivated valine is translocated from the active site to the editing site, which sterically excludes the correctly activated isoleucine. The single editing site contains two valyl binding pockets, one specific for each substrate (Val-AMP or Val-tRNA(Ile)).</text>
</comment>
<comment type="similarity">
    <text evidence="1">Belongs to the class-I aminoacyl-tRNA synthetase family. IleS type 1 subfamily.</text>
</comment>
<proteinExistence type="inferred from homology"/>
<accession>B8HMX3</accession>
<protein>
    <recommendedName>
        <fullName evidence="1">Isoleucine--tRNA ligase</fullName>
        <ecNumber evidence="1">6.1.1.5</ecNumber>
    </recommendedName>
    <alternativeName>
        <fullName evidence="1">Isoleucyl-tRNA synthetase</fullName>
        <shortName evidence="1">IleRS</shortName>
    </alternativeName>
</protein>
<name>SYI_CYAP4</name>
<evidence type="ECO:0000255" key="1">
    <source>
        <dbReference type="HAMAP-Rule" id="MF_02002"/>
    </source>
</evidence>
<keyword id="KW-0030">Aminoacyl-tRNA synthetase</keyword>
<keyword id="KW-0067">ATP-binding</keyword>
<keyword id="KW-0963">Cytoplasm</keyword>
<keyword id="KW-0436">Ligase</keyword>
<keyword id="KW-0479">Metal-binding</keyword>
<keyword id="KW-0547">Nucleotide-binding</keyword>
<keyword id="KW-0648">Protein biosynthesis</keyword>
<keyword id="KW-0862">Zinc</keyword>
<sequence>MTEPGSYKETVNLPQTAFDMRANAVKREPELQKFWAENQIYENLSQENPGDPFILHDGPPYANGDLHIGHALNKILKDIINKYWMLQGRKVRYVPGWDCHGLPIELKVLQGMKSEQRAALTPLSLRQAAKEFALQTVERQKQSFKRYGVWGEWDNPYLTLKPEYEAAQIGVFGQMVLKGYIYRGLKPVYWSPSSQTALAEAELEYPEGHTSRSIYVSFALTSLSATAEAVLKDYLPNLKVAIWTTTPWTIPGNLAVALNPDLTYAVVEKDGSYLLVANELVERLETTLGVSLPIKTTIAGQALEHSTYQHPLFDRQGPLVMGDYVTTDSGTGLVHTAPGHGQEDYVVGQHYGLPILSPVDGNGRFTEEAGQFAGLKVLDEGNEAVIQALQQVGALLKEEAYSHKYPYDWRTKKPVILRATEQWFASVEGFREAALQAIAQVQWIPAQGENRITAMVSERSDWCISRQRNWGVPIPVFYDEETGEPLLNAETIAHVQAIVAEKGSDAWWELSIEELLPQAYRNNGRRYRKGTDTMDVWFDSGSSWAAVLEQREQLRYPAEMYLEGSDQHRGWFQSSLLTSVATHGIAPYKTVLTHGFVLDEQGRKMSKSLGNVVDPAIVIEGGKNQKEDPPYGADILRLWVSSVDYSSDVPLGKNILKQMADIYRKIRNTARFLLGNLHDFDPANNKVEYDRLPQLDRYMLHRIVEVFTEVNEAFTSYQFFRFFQTVQNFCVVDLSNFYLDIAKDRLYISAPDDFRRRSCQTVLWIALENLAKAIAPVVPHLAEDIWQFLPYPTPYKSVFEAGWVSLDATWTNPDPQLLETFEQVRLLRFKVNECLEKLRVNKVIGASLEAKVLLYIADPEKRQQWQNLNPPALAAISGVDELRYFFLTSQVELLNSPDQLSELKSEYRFEFGDSSGGVLPADGQKCDRCWNYSTYVGKDDKHLLLCERCVAVMER</sequence>
<feature type="chain" id="PRO_1000189146" description="Isoleucine--tRNA ligase">
    <location>
        <begin position="1"/>
        <end position="955"/>
    </location>
</feature>
<feature type="short sequence motif" description="'HIGH' region">
    <location>
        <begin position="60"/>
        <end position="70"/>
    </location>
</feature>
<feature type="short sequence motif" description="'KMSKS' region">
    <location>
        <begin position="604"/>
        <end position="608"/>
    </location>
</feature>
<feature type="binding site" evidence="1">
    <location>
        <position position="563"/>
    </location>
    <ligand>
        <name>L-isoleucyl-5'-AMP</name>
        <dbReference type="ChEBI" id="CHEBI:178002"/>
    </ligand>
</feature>
<feature type="binding site" evidence="1">
    <location>
        <position position="607"/>
    </location>
    <ligand>
        <name>ATP</name>
        <dbReference type="ChEBI" id="CHEBI:30616"/>
    </ligand>
</feature>
<feature type="binding site" evidence="1">
    <location>
        <position position="926"/>
    </location>
    <ligand>
        <name>Zn(2+)</name>
        <dbReference type="ChEBI" id="CHEBI:29105"/>
    </ligand>
</feature>
<feature type="binding site" evidence="1">
    <location>
        <position position="929"/>
    </location>
    <ligand>
        <name>Zn(2+)</name>
        <dbReference type="ChEBI" id="CHEBI:29105"/>
    </ligand>
</feature>
<feature type="binding site" evidence="1">
    <location>
        <position position="946"/>
    </location>
    <ligand>
        <name>Zn(2+)</name>
        <dbReference type="ChEBI" id="CHEBI:29105"/>
    </ligand>
</feature>
<feature type="binding site" evidence="1">
    <location>
        <position position="949"/>
    </location>
    <ligand>
        <name>Zn(2+)</name>
        <dbReference type="ChEBI" id="CHEBI:29105"/>
    </ligand>
</feature>
<dbReference type="EC" id="6.1.1.5" evidence="1"/>
<dbReference type="EMBL" id="CP001344">
    <property type="protein sequence ID" value="ACL45442.1"/>
    <property type="molecule type" value="Genomic_DNA"/>
</dbReference>
<dbReference type="SMR" id="B8HMX3"/>
<dbReference type="STRING" id="395961.Cyan7425_3114"/>
<dbReference type="KEGG" id="cyn:Cyan7425_3114"/>
<dbReference type="eggNOG" id="COG0060">
    <property type="taxonomic scope" value="Bacteria"/>
</dbReference>
<dbReference type="HOGENOM" id="CLU_001493_7_0_3"/>
<dbReference type="OrthoDB" id="9810365at2"/>
<dbReference type="GO" id="GO:0005737">
    <property type="term" value="C:cytoplasm"/>
    <property type="evidence" value="ECO:0007669"/>
    <property type="project" value="UniProtKB-SubCell"/>
</dbReference>
<dbReference type="GO" id="GO:0002161">
    <property type="term" value="F:aminoacyl-tRNA deacylase activity"/>
    <property type="evidence" value="ECO:0007669"/>
    <property type="project" value="InterPro"/>
</dbReference>
<dbReference type="GO" id="GO:0005524">
    <property type="term" value="F:ATP binding"/>
    <property type="evidence" value="ECO:0007669"/>
    <property type="project" value="UniProtKB-UniRule"/>
</dbReference>
<dbReference type="GO" id="GO:0004822">
    <property type="term" value="F:isoleucine-tRNA ligase activity"/>
    <property type="evidence" value="ECO:0007669"/>
    <property type="project" value="UniProtKB-UniRule"/>
</dbReference>
<dbReference type="GO" id="GO:0000049">
    <property type="term" value="F:tRNA binding"/>
    <property type="evidence" value="ECO:0007669"/>
    <property type="project" value="InterPro"/>
</dbReference>
<dbReference type="GO" id="GO:0008270">
    <property type="term" value="F:zinc ion binding"/>
    <property type="evidence" value="ECO:0007669"/>
    <property type="project" value="UniProtKB-UniRule"/>
</dbReference>
<dbReference type="GO" id="GO:0006428">
    <property type="term" value="P:isoleucyl-tRNA aminoacylation"/>
    <property type="evidence" value="ECO:0007669"/>
    <property type="project" value="UniProtKB-UniRule"/>
</dbReference>
<dbReference type="CDD" id="cd07960">
    <property type="entry name" value="Anticodon_Ia_Ile_BEm"/>
    <property type="match status" value="1"/>
</dbReference>
<dbReference type="CDD" id="cd00818">
    <property type="entry name" value="IleRS_core"/>
    <property type="match status" value="1"/>
</dbReference>
<dbReference type="FunFam" id="1.10.730.20:FF:000001">
    <property type="entry name" value="Isoleucine--tRNA ligase"/>
    <property type="match status" value="1"/>
</dbReference>
<dbReference type="FunFam" id="3.40.50.620:FF:000152">
    <property type="entry name" value="Isoleucine--tRNA ligase"/>
    <property type="match status" value="1"/>
</dbReference>
<dbReference type="FunFam" id="1.10.10.830:FF:000002">
    <property type="entry name" value="Isoleucine--tRNA ligase, mitochondrial"/>
    <property type="match status" value="1"/>
</dbReference>
<dbReference type="FunFam" id="3.40.50.620:FF:000128">
    <property type="entry name" value="Isoleucyl-tRNA synthetase 2, mitochondrial"/>
    <property type="match status" value="1"/>
</dbReference>
<dbReference type="FunFam" id="3.90.740.10:FF:000009">
    <property type="entry name" value="Isoleucyl-tRNA synthetase 2, mitochondrial"/>
    <property type="match status" value="1"/>
</dbReference>
<dbReference type="Gene3D" id="1.10.730.20">
    <property type="match status" value="1"/>
</dbReference>
<dbReference type="Gene3D" id="3.40.50.620">
    <property type="entry name" value="HUPs"/>
    <property type="match status" value="2"/>
</dbReference>
<dbReference type="Gene3D" id="1.10.10.830">
    <property type="entry name" value="Ile-tRNA synthetase CP2 domain-like"/>
    <property type="match status" value="1"/>
</dbReference>
<dbReference type="Gene3D" id="3.90.740.10">
    <property type="entry name" value="Valyl/Leucyl/Isoleucyl-tRNA synthetase, editing domain"/>
    <property type="match status" value="1"/>
</dbReference>
<dbReference type="HAMAP" id="MF_02002">
    <property type="entry name" value="Ile_tRNA_synth_type1"/>
    <property type="match status" value="1"/>
</dbReference>
<dbReference type="InterPro" id="IPR001412">
    <property type="entry name" value="aa-tRNA-synth_I_CS"/>
</dbReference>
<dbReference type="InterPro" id="IPR002300">
    <property type="entry name" value="aa-tRNA-synth_Ia"/>
</dbReference>
<dbReference type="InterPro" id="IPR033708">
    <property type="entry name" value="Anticodon_Ile_BEm"/>
</dbReference>
<dbReference type="InterPro" id="IPR002301">
    <property type="entry name" value="Ile-tRNA-ligase"/>
</dbReference>
<dbReference type="InterPro" id="IPR023585">
    <property type="entry name" value="Ile-tRNA-ligase_type1"/>
</dbReference>
<dbReference type="InterPro" id="IPR050081">
    <property type="entry name" value="Ile-tRNA_ligase"/>
</dbReference>
<dbReference type="InterPro" id="IPR013155">
    <property type="entry name" value="M/V/L/I-tRNA-synth_anticd-bd"/>
</dbReference>
<dbReference type="InterPro" id="IPR014729">
    <property type="entry name" value="Rossmann-like_a/b/a_fold"/>
</dbReference>
<dbReference type="InterPro" id="IPR009080">
    <property type="entry name" value="tRNAsynth_Ia_anticodon-bd"/>
</dbReference>
<dbReference type="InterPro" id="IPR009008">
    <property type="entry name" value="Val/Leu/Ile-tRNA-synth_edit"/>
</dbReference>
<dbReference type="InterPro" id="IPR010663">
    <property type="entry name" value="Znf_FPG/IleRS"/>
</dbReference>
<dbReference type="NCBIfam" id="TIGR00392">
    <property type="entry name" value="ileS"/>
    <property type="match status" value="1"/>
</dbReference>
<dbReference type="PANTHER" id="PTHR42765:SF1">
    <property type="entry name" value="ISOLEUCINE--TRNA LIGASE, MITOCHONDRIAL"/>
    <property type="match status" value="1"/>
</dbReference>
<dbReference type="PANTHER" id="PTHR42765">
    <property type="entry name" value="SOLEUCYL-TRNA SYNTHETASE"/>
    <property type="match status" value="1"/>
</dbReference>
<dbReference type="Pfam" id="PF08264">
    <property type="entry name" value="Anticodon_1"/>
    <property type="match status" value="1"/>
</dbReference>
<dbReference type="Pfam" id="PF00133">
    <property type="entry name" value="tRNA-synt_1"/>
    <property type="match status" value="1"/>
</dbReference>
<dbReference type="Pfam" id="PF06827">
    <property type="entry name" value="zf-FPG_IleRS"/>
    <property type="match status" value="1"/>
</dbReference>
<dbReference type="PRINTS" id="PR00984">
    <property type="entry name" value="TRNASYNTHILE"/>
</dbReference>
<dbReference type="SUPFAM" id="SSF47323">
    <property type="entry name" value="Anticodon-binding domain of a subclass of class I aminoacyl-tRNA synthetases"/>
    <property type="match status" value="1"/>
</dbReference>
<dbReference type="SUPFAM" id="SSF52374">
    <property type="entry name" value="Nucleotidylyl transferase"/>
    <property type="match status" value="1"/>
</dbReference>
<dbReference type="SUPFAM" id="SSF50677">
    <property type="entry name" value="ValRS/IleRS/LeuRS editing domain"/>
    <property type="match status" value="1"/>
</dbReference>
<dbReference type="PROSITE" id="PS00178">
    <property type="entry name" value="AA_TRNA_LIGASE_I"/>
    <property type="match status" value="1"/>
</dbReference>
<reference key="1">
    <citation type="journal article" date="2011" name="MBio">
        <title>Novel metabolic attributes of the genus Cyanothece, comprising a group of unicellular nitrogen-fixing Cyanobacteria.</title>
        <authorList>
            <person name="Bandyopadhyay A."/>
            <person name="Elvitigala T."/>
            <person name="Welsh E."/>
            <person name="Stockel J."/>
            <person name="Liberton M."/>
            <person name="Min H."/>
            <person name="Sherman L.A."/>
            <person name="Pakrasi H.B."/>
        </authorList>
    </citation>
    <scope>NUCLEOTIDE SEQUENCE [LARGE SCALE GENOMIC DNA]</scope>
    <source>
        <strain>PCC 7425 / ATCC 29141</strain>
    </source>
</reference>